<name>ETKMT_DANRE</name>
<keyword id="KW-0963">Cytoplasm</keyword>
<keyword id="KW-0489">Methyltransferase</keyword>
<keyword id="KW-0496">Mitochondrion</keyword>
<keyword id="KW-1185">Reference proteome</keyword>
<keyword id="KW-0808">Transferase</keyword>
<keyword id="KW-0809">Transit peptide</keyword>
<reference key="1">
    <citation type="submission" date="2007-03" db="EMBL/GenBank/DDBJ databases">
        <authorList>
            <consortium name="NIH - Zebrafish Gene Collection (ZGC) project"/>
        </authorList>
    </citation>
    <scope>NUCLEOTIDE SEQUENCE [LARGE SCALE MRNA]</scope>
    <source>
        <tissue>Heart</tissue>
    </source>
</reference>
<accession>A3KP85</accession>
<feature type="transit peptide" description="Mitochondrion" evidence="3">
    <location>
        <begin position="1"/>
        <end status="unknown"/>
    </location>
</feature>
<feature type="chain" id="PRO_0000318712" description="Electron transfer flavoprotein beta subunit lysine methyltransferase">
    <location>
        <begin status="unknown"/>
        <end position="258"/>
    </location>
</feature>
<proteinExistence type="evidence at transcript level"/>
<organism>
    <name type="scientific">Danio rerio</name>
    <name type="common">Zebrafish</name>
    <name type="synonym">Brachydanio rerio</name>
    <dbReference type="NCBI Taxonomy" id="7955"/>
    <lineage>
        <taxon>Eukaryota</taxon>
        <taxon>Metazoa</taxon>
        <taxon>Chordata</taxon>
        <taxon>Craniata</taxon>
        <taxon>Vertebrata</taxon>
        <taxon>Euteleostomi</taxon>
        <taxon>Actinopterygii</taxon>
        <taxon>Neopterygii</taxon>
        <taxon>Teleostei</taxon>
        <taxon>Ostariophysi</taxon>
        <taxon>Cypriniformes</taxon>
        <taxon>Danionidae</taxon>
        <taxon>Danioninae</taxon>
        <taxon>Danio</taxon>
    </lineage>
</organism>
<gene>
    <name evidence="2" type="primary">etfbkmt</name>
    <name type="synonym">mettl20</name>
</gene>
<protein>
    <recommendedName>
        <fullName evidence="4">Electron transfer flavoprotein beta subunit lysine methyltransferase</fullName>
        <ecNumber evidence="1 2">2.1.1.-</ecNumber>
    </recommendedName>
    <alternativeName>
        <fullName>ETFB lysine methyltransferase</fullName>
        <shortName>ETFB-KMT</shortName>
    </alternativeName>
    <alternativeName>
        <fullName evidence="4">Protein N-lysine methyltransferase METTL20</fullName>
    </alternativeName>
</protein>
<sequence length="258" mass="28950">MYRRIIMCFRSRATLNSFQRGMCCSTRRYVSSTGSEDDIKNFIIDNTEIVNSQSLTPEISLRLFTPTCRFWTENPEFWPFPDPYWAIYWPGGQALARYLLNNPEVSAGRKVLDLGCGCGASAIAARLSGASCVVANDIDPIAAIATKMNCELNNLAPLPCVTDNMIGSETDGWDLILLGDMFYDEALADGLHQWLQTCTNTHGTQVLIGDPGRAQFEDHNIRRSLHRLAHFQLPDSVKEENYGLTSSAVWRYNCKPDH</sequence>
<evidence type="ECO:0000250" key="1">
    <source>
        <dbReference type="UniProtKB" id="Q80ZM3"/>
    </source>
</evidence>
<evidence type="ECO:0000250" key="2">
    <source>
        <dbReference type="UniProtKB" id="Q8IXQ9"/>
    </source>
</evidence>
<evidence type="ECO:0000255" key="3"/>
<evidence type="ECO:0000305" key="4"/>
<dbReference type="EC" id="2.1.1.-" evidence="1 2"/>
<dbReference type="EMBL" id="BC134209">
    <property type="protein sequence ID" value="AAI34210.1"/>
    <property type="status" value="ALT_INIT"/>
    <property type="molecule type" value="mRNA"/>
</dbReference>
<dbReference type="RefSeq" id="NP_001154967.1">
    <property type="nucleotide sequence ID" value="NM_001161495.1"/>
</dbReference>
<dbReference type="SMR" id="A3KP85"/>
<dbReference type="FunCoup" id="A3KP85">
    <property type="interactions" value="4"/>
</dbReference>
<dbReference type="STRING" id="7955.ENSDARP00000103806"/>
<dbReference type="PaxDb" id="7955-ENSDARP00000103806"/>
<dbReference type="GeneID" id="100005455"/>
<dbReference type="KEGG" id="dre:100005455"/>
<dbReference type="AGR" id="ZFIN:ZDB-GENE-111107-1"/>
<dbReference type="CTD" id="254013"/>
<dbReference type="ZFIN" id="ZDB-GENE-111107-1">
    <property type="gene designation" value="etfbkmt"/>
</dbReference>
<dbReference type="eggNOG" id="ENOG502QUSY">
    <property type="taxonomic scope" value="Eukaryota"/>
</dbReference>
<dbReference type="InParanoid" id="A3KP85"/>
<dbReference type="OrthoDB" id="194386at2759"/>
<dbReference type="PhylomeDB" id="A3KP85"/>
<dbReference type="Reactome" id="R-DRE-8876725">
    <property type="pathway name" value="Protein methylation"/>
</dbReference>
<dbReference type="PRO" id="PR:A3KP85"/>
<dbReference type="Proteomes" id="UP000000437">
    <property type="component" value="Alternate scaffold 25"/>
</dbReference>
<dbReference type="Proteomes" id="UP000000437">
    <property type="component" value="Chromosome 25"/>
</dbReference>
<dbReference type="GO" id="GO:0005759">
    <property type="term" value="C:mitochondrial matrix"/>
    <property type="evidence" value="ECO:0000250"/>
    <property type="project" value="UniProtKB"/>
</dbReference>
<dbReference type="GO" id="GO:0016279">
    <property type="term" value="F:protein-lysine N-methyltransferase activity"/>
    <property type="evidence" value="ECO:0000250"/>
    <property type="project" value="UniProtKB"/>
</dbReference>
<dbReference type="GO" id="GO:0032259">
    <property type="term" value="P:methylation"/>
    <property type="evidence" value="ECO:0007669"/>
    <property type="project" value="UniProtKB-KW"/>
</dbReference>
<dbReference type="GO" id="GO:1904736">
    <property type="term" value="P:negative regulation of fatty acid beta-oxidation using acyl-CoA dehydrogenase"/>
    <property type="evidence" value="ECO:0000250"/>
    <property type="project" value="UniProtKB"/>
</dbReference>
<dbReference type="CDD" id="cd02440">
    <property type="entry name" value="AdoMet_MTases"/>
    <property type="match status" value="1"/>
</dbReference>
<dbReference type="FunFam" id="3.40.50.150:FF:000202">
    <property type="entry name" value="Electron transfer flavoprotein subunit beta lysine methyltransferase"/>
    <property type="match status" value="1"/>
</dbReference>
<dbReference type="Gene3D" id="3.40.50.150">
    <property type="entry name" value="Vaccinia Virus protein VP39"/>
    <property type="match status" value="1"/>
</dbReference>
<dbReference type="InterPro" id="IPR050078">
    <property type="entry name" value="Ribosomal_L11_MeTrfase_PrmA"/>
</dbReference>
<dbReference type="InterPro" id="IPR029063">
    <property type="entry name" value="SAM-dependent_MTases_sf"/>
</dbReference>
<dbReference type="PANTHER" id="PTHR43648">
    <property type="entry name" value="ELECTRON TRANSFER FLAVOPROTEIN BETA SUBUNIT LYSINE METHYLTRANSFERASE"/>
    <property type="match status" value="1"/>
</dbReference>
<dbReference type="PANTHER" id="PTHR43648:SF1">
    <property type="entry name" value="ELECTRON TRANSFER FLAVOPROTEIN BETA SUBUNIT LYSINE METHYLTRANSFERASE"/>
    <property type="match status" value="1"/>
</dbReference>
<dbReference type="Pfam" id="PF06325">
    <property type="entry name" value="PrmA"/>
    <property type="match status" value="1"/>
</dbReference>
<dbReference type="SUPFAM" id="SSF53335">
    <property type="entry name" value="S-adenosyl-L-methionine-dependent methyltransferases"/>
    <property type="match status" value="1"/>
</dbReference>
<comment type="function">
    <text evidence="2">Protein-lysine methyltransferase that selectively trimethylates the flavoprotein ETFB in mitochondria. Thereby, may negatively regulate the function of ETFB in electron transfer from Acyl-CoA dehydrogenases to the main respiratory chain.</text>
</comment>
<comment type="catalytic activity">
    <reaction evidence="2">
        <text>L-lysyl-[protein] + 3 S-adenosyl-L-methionine = N(6),N(6),N(6)-trimethyl-L-lysyl-[protein] + 3 S-adenosyl-L-homocysteine + 3 H(+)</text>
        <dbReference type="Rhea" id="RHEA:54192"/>
        <dbReference type="Rhea" id="RHEA-COMP:9752"/>
        <dbReference type="Rhea" id="RHEA-COMP:13826"/>
        <dbReference type="ChEBI" id="CHEBI:15378"/>
        <dbReference type="ChEBI" id="CHEBI:29969"/>
        <dbReference type="ChEBI" id="CHEBI:57856"/>
        <dbReference type="ChEBI" id="CHEBI:59789"/>
        <dbReference type="ChEBI" id="CHEBI:61961"/>
    </reaction>
    <physiologicalReaction direction="left-to-right" evidence="2">
        <dbReference type="Rhea" id="RHEA:54193"/>
    </physiologicalReaction>
</comment>
<comment type="subcellular location">
    <subcellularLocation>
        <location evidence="2">Cytoplasm</location>
    </subcellularLocation>
    <subcellularLocation>
        <location evidence="2">Mitochondrion matrix</location>
    </subcellularLocation>
</comment>
<comment type="similarity">
    <text evidence="4">Belongs to the methyltransferase superfamily. ETFBKMT family.</text>
</comment>
<comment type="sequence caution" evidence="4">
    <conflict type="erroneous initiation">
        <sequence resource="EMBL-CDS" id="AAI34210"/>
    </conflict>
    <text>Extended N-terminus.</text>
</comment>